<feature type="chain" id="PRO_1000190978" description="Ketol-acid reductoisomerase (NADP(+))">
    <location>
        <begin position="1"/>
        <end position="339"/>
    </location>
</feature>
<feature type="domain" description="KARI N-terminal Rossmann" evidence="2">
    <location>
        <begin position="1"/>
        <end position="182"/>
    </location>
</feature>
<feature type="domain" description="KARI C-terminal knotted" evidence="3">
    <location>
        <begin position="183"/>
        <end position="328"/>
    </location>
</feature>
<feature type="active site" evidence="1">
    <location>
        <position position="108"/>
    </location>
</feature>
<feature type="binding site" evidence="1">
    <location>
        <begin position="24"/>
        <end position="27"/>
    </location>
    <ligand>
        <name>NADP(+)</name>
        <dbReference type="ChEBI" id="CHEBI:58349"/>
    </ligand>
</feature>
<feature type="binding site" evidence="1">
    <location>
        <position position="48"/>
    </location>
    <ligand>
        <name>NADP(+)</name>
        <dbReference type="ChEBI" id="CHEBI:58349"/>
    </ligand>
</feature>
<feature type="binding site" evidence="1">
    <location>
        <position position="51"/>
    </location>
    <ligand>
        <name>NADP(+)</name>
        <dbReference type="ChEBI" id="CHEBI:58349"/>
    </ligand>
</feature>
<feature type="binding site" evidence="1">
    <location>
        <position position="53"/>
    </location>
    <ligand>
        <name>NADP(+)</name>
        <dbReference type="ChEBI" id="CHEBI:58349"/>
    </ligand>
</feature>
<feature type="binding site" evidence="1">
    <location>
        <begin position="83"/>
        <end position="86"/>
    </location>
    <ligand>
        <name>NADP(+)</name>
        <dbReference type="ChEBI" id="CHEBI:58349"/>
    </ligand>
</feature>
<feature type="binding site" evidence="1">
    <location>
        <position position="134"/>
    </location>
    <ligand>
        <name>NADP(+)</name>
        <dbReference type="ChEBI" id="CHEBI:58349"/>
    </ligand>
</feature>
<feature type="binding site" evidence="1">
    <location>
        <position position="191"/>
    </location>
    <ligand>
        <name>Mg(2+)</name>
        <dbReference type="ChEBI" id="CHEBI:18420"/>
        <label>1</label>
    </ligand>
</feature>
<feature type="binding site" evidence="1">
    <location>
        <position position="191"/>
    </location>
    <ligand>
        <name>Mg(2+)</name>
        <dbReference type="ChEBI" id="CHEBI:18420"/>
        <label>2</label>
    </ligand>
</feature>
<feature type="binding site" evidence="1">
    <location>
        <position position="195"/>
    </location>
    <ligand>
        <name>Mg(2+)</name>
        <dbReference type="ChEBI" id="CHEBI:18420"/>
        <label>1</label>
    </ligand>
</feature>
<feature type="binding site" evidence="1">
    <location>
        <position position="227"/>
    </location>
    <ligand>
        <name>Mg(2+)</name>
        <dbReference type="ChEBI" id="CHEBI:18420"/>
        <label>2</label>
    </ligand>
</feature>
<feature type="binding site" evidence="1">
    <location>
        <position position="231"/>
    </location>
    <ligand>
        <name>Mg(2+)</name>
        <dbReference type="ChEBI" id="CHEBI:18420"/>
        <label>2</label>
    </ligand>
</feature>
<feature type="binding site" evidence="1">
    <location>
        <position position="252"/>
    </location>
    <ligand>
        <name>substrate</name>
    </ligand>
</feature>
<sequence length="339" mass="36643">MRVYYDRDADINLIKSKKVAIIGYGSQGHAHALNLRDSGVMDVSVALREGSATAAKAAGEGLKVLSVADAAKWADVVMMLTPDELQGDIYSEHLAPNLKQGAALLFAHGLNIHFNLIEPRKDLDVAMVAPKGPGHTVRSEYKRGGGVPCLIAIAQDASGNAHDIALSYASAIGGGRAGIIETTFREECETDLFGEQVVLCGGLVELIRGGFETLVEAGYAPEMAYFECLHEVKLIVDLIYEGGIANMNYSISNTAEYGEYVTGPRIVTPETKAEMKRVLTDIQSGKFTRDWMLENKVNQTSFKATRAKAASHQIEEVGAKLRAMMPWIGANKLVDKAKN</sequence>
<evidence type="ECO:0000255" key="1">
    <source>
        <dbReference type="HAMAP-Rule" id="MF_00435"/>
    </source>
</evidence>
<evidence type="ECO:0000255" key="2">
    <source>
        <dbReference type="PROSITE-ProRule" id="PRU01197"/>
    </source>
</evidence>
<evidence type="ECO:0000255" key="3">
    <source>
        <dbReference type="PROSITE-ProRule" id="PRU01198"/>
    </source>
</evidence>
<organism>
    <name type="scientific">Methylocella silvestris (strain DSM 15510 / CIP 108128 / LMG 27833 / NCIMB 13906 / BL2)</name>
    <dbReference type="NCBI Taxonomy" id="395965"/>
    <lineage>
        <taxon>Bacteria</taxon>
        <taxon>Pseudomonadati</taxon>
        <taxon>Pseudomonadota</taxon>
        <taxon>Alphaproteobacteria</taxon>
        <taxon>Hyphomicrobiales</taxon>
        <taxon>Beijerinckiaceae</taxon>
        <taxon>Methylocella</taxon>
    </lineage>
</organism>
<gene>
    <name evidence="1" type="primary">ilvC</name>
    <name type="ordered locus">Msil_3011</name>
</gene>
<dbReference type="EC" id="1.1.1.86" evidence="1"/>
<dbReference type="EMBL" id="CP001280">
    <property type="protein sequence ID" value="ACK51922.1"/>
    <property type="molecule type" value="Genomic_DNA"/>
</dbReference>
<dbReference type="SMR" id="B8EKP4"/>
<dbReference type="STRING" id="395965.Msil_3011"/>
<dbReference type="KEGG" id="msl:Msil_3011"/>
<dbReference type="eggNOG" id="COG0059">
    <property type="taxonomic scope" value="Bacteria"/>
</dbReference>
<dbReference type="HOGENOM" id="CLU_033821_0_1_5"/>
<dbReference type="OrthoDB" id="9804088at2"/>
<dbReference type="UniPathway" id="UPA00047">
    <property type="reaction ID" value="UER00056"/>
</dbReference>
<dbReference type="UniPathway" id="UPA00049">
    <property type="reaction ID" value="UER00060"/>
</dbReference>
<dbReference type="Proteomes" id="UP000002257">
    <property type="component" value="Chromosome"/>
</dbReference>
<dbReference type="GO" id="GO:0005829">
    <property type="term" value="C:cytosol"/>
    <property type="evidence" value="ECO:0007669"/>
    <property type="project" value="TreeGrafter"/>
</dbReference>
<dbReference type="GO" id="GO:0004455">
    <property type="term" value="F:ketol-acid reductoisomerase activity"/>
    <property type="evidence" value="ECO:0007669"/>
    <property type="project" value="UniProtKB-UniRule"/>
</dbReference>
<dbReference type="GO" id="GO:0000287">
    <property type="term" value="F:magnesium ion binding"/>
    <property type="evidence" value="ECO:0007669"/>
    <property type="project" value="UniProtKB-UniRule"/>
</dbReference>
<dbReference type="GO" id="GO:0050661">
    <property type="term" value="F:NADP binding"/>
    <property type="evidence" value="ECO:0007669"/>
    <property type="project" value="InterPro"/>
</dbReference>
<dbReference type="GO" id="GO:0009097">
    <property type="term" value="P:isoleucine biosynthetic process"/>
    <property type="evidence" value="ECO:0007669"/>
    <property type="project" value="UniProtKB-UniRule"/>
</dbReference>
<dbReference type="GO" id="GO:0009099">
    <property type="term" value="P:L-valine biosynthetic process"/>
    <property type="evidence" value="ECO:0007669"/>
    <property type="project" value="UniProtKB-UniRule"/>
</dbReference>
<dbReference type="FunFam" id="3.40.50.720:FF:000023">
    <property type="entry name" value="Ketol-acid reductoisomerase (NADP(+))"/>
    <property type="match status" value="1"/>
</dbReference>
<dbReference type="Gene3D" id="6.10.240.10">
    <property type="match status" value="1"/>
</dbReference>
<dbReference type="Gene3D" id="3.40.50.720">
    <property type="entry name" value="NAD(P)-binding Rossmann-like Domain"/>
    <property type="match status" value="1"/>
</dbReference>
<dbReference type="HAMAP" id="MF_00435">
    <property type="entry name" value="IlvC"/>
    <property type="match status" value="1"/>
</dbReference>
<dbReference type="InterPro" id="IPR008927">
    <property type="entry name" value="6-PGluconate_DH-like_C_sf"/>
</dbReference>
<dbReference type="InterPro" id="IPR013023">
    <property type="entry name" value="KARI"/>
</dbReference>
<dbReference type="InterPro" id="IPR000506">
    <property type="entry name" value="KARI_C"/>
</dbReference>
<dbReference type="InterPro" id="IPR013116">
    <property type="entry name" value="KARI_N"/>
</dbReference>
<dbReference type="InterPro" id="IPR014359">
    <property type="entry name" value="KARI_prok"/>
</dbReference>
<dbReference type="InterPro" id="IPR036291">
    <property type="entry name" value="NAD(P)-bd_dom_sf"/>
</dbReference>
<dbReference type="NCBIfam" id="TIGR00465">
    <property type="entry name" value="ilvC"/>
    <property type="match status" value="1"/>
</dbReference>
<dbReference type="NCBIfam" id="NF004017">
    <property type="entry name" value="PRK05479.1"/>
    <property type="match status" value="1"/>
</dbReference>
<dbReference type="NCBIfam" id="NF009940">
    <property type="entry name" value="PRK13403.1"/>
    <property type="match status" value="1"/>
</dbReference>
<dbReference type="PANTHER" id="PTHR21371">
    <property type="entry name" value="KETOL-ACID REDUCTOISOMERASE, MITOCHONDRIAL"/>
    <property type="match status" value="1"/>
</dbReference>
<dbReference type="PANTHER" id="PTHR21371:SF1">
    <property type="entry name" value="KETOL-ACID REDUCTOISOMERASE, MITOCHONDRIAL"/>
    <property type="match status" value="1"/>
</dbReference>
<dbReference type="Pfam" id="PF01450">
    <property type="entry name" value="KARI_C"/>
    <property type="match status" value="1"/>
</dbReference>
<dbReference type="Pfam" id="PF07991">
    <property type="entry name" value="KARI_N"/>
    <property type="match status" value="1"/>
</dbReference>
<dbReference type="PIRSF" id="PIRSF000116">
    <property type="entry name" value="IlvC_gammaproteo"/>
    <property type="match status" value="1"/>
</dbReference>
<dbReference type="SUPFAM" id="SSF48179">
    <property type="entry name" value="6-phosphogluconate dehydrogenase C-terminal domain-like"/>
    <property type="match status" value="1"/>
</dbReference>
<dbReference type="SUPFAM" id="SSF51735">
    <property type="entry name" value="NAD(P)-binding Rossmann-fold domains"/>
    <property type="match status" value="1"/>
</dbReference>
<dbReference type="PROSITE" id="PS51851">
    <property type="entry name" value="KARI_C"/>
    <property type="match status" value="1"/>
</dbReference>
<dbReference type="PROSITE" id="PS51850">
    <property type="entry name" value="KARI_N"/>
    <property type="match status" value="1"/>
</dbReference>
<name>ILVC_METSB</name>
<proteinExistence type="inferred from homology"/>
<accession>B8EKP4</accession>
<keyword id="KW-0028">Amino-acid biosynthesis</keyword>
<keyword id="KW-0100">Branched-chain amino acid biosynthesis</keyword>
<keyword id="KW-0460">Magnesium</keyword>
<keyword id="KW-0479">Metal-binding</keyword>
<keyword id="KW-0521">NADP</keyword>
<keyword id="KW-0560">Oxidoreductase</keyword>
<keyword id="KW-1185">Reference proteome</keyword>
<comment type="function">
    <text evidence="1">Involved in the biosynthesis of branched-chain amino acids (BCAA). Catalyzes an alkyl-migration followed by a ketol-acid reduction of (S)-2-acetolactate (S2AL) to yield (R)-2,3-dihydroxy-isovalerate. In the isomerase reaction, S2AL is rearranged via a Mg-dependent methyl migration to produce 3-hydroxy-3-methyl-2-ketobutyrate (HMKB). In the reductase reaction, this 2-ketoacid undergoes a metal-dependent reduction by NADPH to yield (R)-2,3-dihydroxy-isovalerate.</text>
</comment>
<comment type="catalytic activity">
    <reaction evidence="1">
        <text>(2R)-2,3-dihydroxy-3-methylbutanoate + NADP(+) = (2S)-2-acetolactate + NADPH + H(+)</text>
        <dbReference type="Rhea" id="RHEA:22068"/>
        <dbReference type="ChEBI" id="CHEBI:15378"/>
        <dbReference type="ChEBI" id="CHEBI:49072"/>
        <dbReference type="ChEBI" id="CHEBI:57783"/>
        <dbReference type="ChEBI" id="CHEBI:58349"/>
        <dbReference type="ChEBI" id="CHEBI:58476"/>
        <dbReference type="EC" id="1.1.1.86"/>
    </reaction>
</comment>
<comment type="catalytic activity">
    <reaction evidence="1">
        <text>(2R,3R)-2,3-dihydroxy-3-methylpentanoate + NADP(+) = (S)-2-ethyl-2-hydroxy-3-oxobutanoate + NADPH + H(+)</text>
        <dbReference type="Rhea" id="RHEA:13493"/>
        <dbReference type="ChEBI" id="CHEBI:15378"/>
        <dbReference type="ChEBI" id="CHEBI:49256"/>
        <dbReference type="ChEBI" id="CHEBI:49258"/>
        <dbReference type="ChEBI" id="CHEBI:57783"/>
        <dbReference type="ChEBI" id="CHEBI:58349"/>
        <dbReference type="EC" id="1.1.1.86"/>
    </reaction>
</comment>
<comment type="cofactor">
    <cofactor evidence="1">
        <name>Mg(2+)</name>
        <dbReference type="ChEBI" id="CHEBI:18420"/>
    </cofactor>
    <text evidence="1">Binds 2 magnesium ions per subunit.</text>
</comment>
<comment type="pathway">
    <text evidence="1">Amino-acid biosynthesis; L-isoleucine biosynthesis; L-isoleucine from 2-oxobutanoate: step 2/4.</text>
</comment>
<comment type="pathway">
    <text evidence="1">Amino-acid biosynthesis; L-valine biosynthesis; L-valine from pyruvate: step 2/4.</text>
</comment>
<comment type="similarity">
    <text evidence="1">Belongs to the ketol-acid reductoisomerase family.</text>
</comment>
<reference key="1">
    <citation type="journal article" date="2010" name="J. Bacteriol.">
        <title>Complete genome sequence of the aerobic facultative methanotroph Methylocella silvestris BL2.</title>
        <authorList>
            <person name="Chen Y."/>
            <person name="Crombie A."/>
            <person name="Rahman M.T."/>
            <person name="Dedysh S.N."/>
            <person name="Liesack W."/>
            <person name="Stott M.B."/>
            <person name="Alam M."/>
            <person name="Theisen A.R."/>
            <person name="Murrell J.C."/>
            <person name="Dunfield P.F."/>
        </authorList>
    </citation>
    <scope>NUCLEOTIDE SEQUENCE [LARGE SCALE GENOMIC DNA]</scope>
    <source>
        <strain>DSM 15510 / CIP 108128 / LMG 27833 / NCIMB 13906 / BL2</strain>
    </source>
</reference>
<protein>
    <recommendedName>
        <fullName evidence="1">Ketol-acid reductoisomerase (NADP(+))</fullName>
        <shortName evidence="1">KARI</shortName>
        <ecNumber evidence="1">1.1.1.86</ecNumber>
    </recommendedName>
    <alternativeName>
        <fullName evidence="1">Acetohydroxy-acid isomeroreductase</fullName>
        <shortName evidence="1">AHIR</shortName>
    </alternativeName>
    <alternativeName>
        <fullName evidence="1">Alpha-keto-beta-hydroxylacyl reductoisomerase</fullName>
    </alternativeName>
    <alternativeName>
        <fullName evidence="1">Ketol-acid reductoisomerase type 1</fullName>
    </alternativeName>
    <alternativeName>
        <fullName evidence="1">Ketol-acid reductoisomerase type I</fullName>
    </alternativeName>
</protein>